<dbReference type="EC" id="5.4.99.25" evidence="1"/>
<dbReference type="EMBL" id="CP000259">
    <property type="protein sequence ID" value="ABF32252.1"/>
    <property type="molecule type" value="Genomic_DNA"/>
</dbReference>
<dbReference type="RefSeq" id="WP_002989678.1">
    <property type="nucleotide sequence ID" value="NC_008021.1"/>
</dbReference>
<dbReference type="SMR" id="Q1JLG7"/>
<dbReference type="GeneID" id="69900784"/>
<dbReference type="KEGG" id="spk:MGAS9429_Spy1065"/>
<dbReference type="HOGENOM" id="CLU_032087_0_1_9"/>
<dbReference type="Proteomes" id="UP000002433">
    <property type="component" value="Chromosome"/>
</dbReference>
<dbReference type="GO" id="GO:0003723">
    <property type="term" value="F:RNA binding"/>
    <property type="evidence" value="ECO:0007669"/>
    <property type="project" value="InterPro"/>
</dbReference>
<dbReference type="GO" id="GO:0160148">
    <property type="term" value="F:tRNA pseudouridine(55) synthase activity"/>
    <property type="evidence" value="ECO:0007669"/>
    <property type="project" value="UniProtKB-EC"/>
</dbReference>
<dbReference type="GO" id="GO:1990481">
    <property type="term" value="P:mRNA pseudouridine synthesis"/>
    <property type="evidence" value="ECO:0007669"/>
    <property type="project" value="TreeGrafter"/>
</dbReference>
<dbReference type="GO" id="GO:0031119">
    <property type="term" value="P:tRNA pseudouridine synthesis"/>
    <property type="evidence" value="ECO:0007669"/>
    <property type="project" value="UniProtKB-UniRule"/>
</dbReference>
<dbReference type="CDD" id="cd02573">
    <property type="entry name" value="PseudoU_synth_EcTruB"/>
    <property type="match status" value="1"/>
</dbReference>
<dbReference type="FunFam" id="3.30.2350.10:FF:000011">
    <property type="entry name" value="tRNA pseudouridine synthase B"/>
    <property type="match status" value="1"/>
</dbReference>
<dbReference type="Gene3D" id="3.30.2350.10">
    <property type="entry name" value="Pseudouridine synthase"/>
    <property type="match status" value="1"/>
</dbReference>
<dbReference type="HAMAP" id="MF_01080">
    <property type="entry name" value="TruB_bact"/>
    <property type="match status" value="1"/>
</dbReference>
<dbReference type="InterPro" id="IPR020103">
    <property type="entry name" value="PsdUridine_synth_cat_dom_sf"/>
</dbReference>
<dbReference type="InterPro" id="IPR002501">
    <property type="entry name" value="PsdUridine_synth_N"/>
</dbReference>
<dbReference type="InterPro" id="IPR014780">
    <property type="entry name" value="tRNA_psdUridine_synth_TruB"/>
</dbReference>
<dbReference type="InterPro" id="IPR032819">
    <property type="entry name" value="TruB_C"/>
</dbReference>
<dbReference type="NCBIfam" id="TIGR00431">
    <property type="entry name" value="TruB"/>
    <property type="match status" value="1"/>
</dbReference>
<dbReference type="PANTHER" id="PTHR13767:SF2">
    <property type="entry name" value="PSEUDOURIDYLATE SYNTHASE TRUB1"/>
    <property type="match status" value="1"/>
</dbReference>
<dbReference type="PANTHER" id="PTHR13767">
    <property type="entry name" value="TRNA-PSEUDOURIDINE SYNTHASE"/>
    <property type="match status" value="1"/>
</dbReference>
<dbReference type="Pfam" id="PF16198">
    <property type="entry name" value="TruB_C_2"/>
    <property type="match status" value="1"/>
</dbReference>
<dbReference type="Pfam" id="PF01509">
    <property type="entry name" value="TruB_N"/>
    <property type="match status" value="1"/>
</dbReference>
<dbReference type="SUPFAM" id="SSF55120">
    <property type="entry name" value="Pseudouridine synthase"/>
    <property type="match status" value="1"/>
</dbReference>
<organism>
    <name type="scientific">Streptococcus pyogenes serotype M12 (strain MGAS9429)</name>
    <dbReference type="NCBI Taxonomy" id="370551"/>
    <lineage>
        <taxon>Bacteria</taxon>
        <taxon>Bacillati</taxon>
        <taxon>Bacillota</taxon>
        <taxon>Bacilli</taxon>
        <taxon>Lactobacillales</taxon>
        <taxon>Streptococcaceae</taxon>
        <taxon>Streptococcus</taxon>
    </lineage>
</organism>
<gene>
    <name evidence="1" type="primary">truB</name>
    <name type="ordered locus">MGAS9429_Spy1065</name>
</gene>
<sequence>MINGIINLKKEAGMTSHDAVFKLRKLLQEKKIGHGGTLDPDVVGVLPIAVGKATRVIEYMTEAGKVYEGQVTLGYSTTTEDASGEVVARSSLPAVLTEELVDQTMTTFLGKITQTPPMYSAVKVNGRKLYEYARAGESVERPRREVTISLFERTSPLNFTEDGLCRFSFKVACSKGTYVRTLAVDLGRALGVESHMSFLQRSASAGLTLETAYTLGEIADMVSKQEMSFLLPIEYGVADLPKMVIDDTELTEISFGRRLSLPSQEPLLAAFHGEKVIAILEKRDQEYKPKKVLI</sequence>
<proteinExistence type="inferred from homology"/>
<name>TRUB_STRPC</name>
<reference key="1">
    <citation type="journal article" date="2006" name="Proc. Natl. Acad. Sci. U.S.A.">
        <title>Molecular genetic anatomy of inter- and intraserotype variation in the human bacterial pathogen group A Streptococcus.</title>
        <authorList>
            <person name="Beres S.B."/>
            <person name="Richter E.W."/>
            <person name="Nagiec M.J."/>
            <person name="Sumby P."/>
            <person name="Porcella S.F."/>
            <person name="DeLeo F.R."/>
            <person name="Musser J.M."/>
        </authorList>
    </citation>
    <scope>NUCLEOTIDE SEQUENCE [LARGE SCALE GENOMIC DNA]</scope>
    <source>
        <strain>MGAS9429</strain>
    </source>
</reference>
<keyword id="KW-0413">Isomerase</keyword>
<keyword id="KW-0819">tRNA processing</keyword>
<evidence type="ECO:0000255" key="1">
    <source>
        <dbReference type="HAMAP-Rule" id="MF_01080"/>
    </source>
</evidence>
<feature type="chain" id="PRO_1000084698" description="tRNA pseudouridine synthase B">
    <location>
        <begin position="1"/>
        <end position="294"/>
    </location>
</feature>
<feature type="active site" description="Nucleophile" evidence="1">
    <location>
        <position position="39"/>
    </location>
</feature>
<protein>
    <recommendedName>
        <fullName evidence="1">tRNA pseudouridine synthase B</fullName>
        <ecNumber evidence="1">5.4.99.25</ecNumber>
    </recommendedName>
    <alternativeName>
        <fullName evidence="1">tRNA pseudouridine(55) synthase</fullName>
        <shortName evidence="1">Psi55 synthase</shortName>
    </alternativeName>
    <alternativeName>
        <fullName evidence="1">tRNA pseudouridylate synthase</fullName>
    </alternativeName>
    <alternativeName>
        <fullName evidence="1">tRNA-uridine isomerase</fullName>
    </alternativeName>
</protein>
<accession>Q1JLG7</accession>
<comment type="function">
    <text evidence="1">Responsible for synthesis of pseudouridine from uracil-55 in the psi GC loop of transfer RNAs.</text>
</comment>
<comment type="catalytic activity">
    <reaction evidence="1">
        <text>uridine(55) in tRNA = pseudouridine(55) in tRNA</text>
        <dbReference type="Rhea" id="RHEA:42532"/>
        <dbReference type="Rhea" id="RHEA-COMP:10101"/>
        <dbReference type="Rhea" id="RHEA-COMP:10102"/>
        <dbReference type="ChEBI" id="CHEBI:65314"/>
        <dbReference type="ChEBI" id="CHEBI:65315"/>
        <dbReference type="EC" id="5.4.99.25"/>
    </reaction>
</comment>
<comment type="similarity">
    <text evidence="1">Belongs to the pseudouridine synthase TruB family. Type 1 subfamily.</text>
</comment>